<keyword id="KW-0150">Chloroplast</keyword>
<keyword id="KW-0507">mRNA processing</keyword>
<keyword id="KW-0934">Plastid</keyword>
<keyword id="KW-0694">RNA-binding</keyword>
<keyword id="KW-0819">tRNA processing</keyword>
<name>MATK_LINPE</name>
<accession>Q8WKM2</accession>
<geneLocation type="chloroplast"/>
<evidence type="ECO:0000255" key="1">
    <source>
        <dbReference type="HAMAP-Rule" id="MF_01390"/>
    </source>
</evidence>
<protein>
    <recommendedName>
        <fullName evidence="1">Maturase K</fullName>
    </recommendedName>
    <alternativeName>
        <fullName evidence="1">Intron maturase</fullName>
    </alternativeName>
</protein>
<proteinExistence type="inferred from homology"/>
<reference key="1">
    <citation type="submission" date="2000-02" db="EMBL/GenBank/DDBJ databases">
        <title>Phylogenetic relationships of the aquatic angiosperm family Podostemaceae inferred from matK sequence data.</title>
        <authorList>
            <person name="Kita Y."/>
            <person name="Kato M."/>
        </authorList>
    </citation>
    <scope>NUCLEOTIDE SEQUENCE [GENOMIC DNA]</scope>
</reference>
<feature type="chain" id="PRO_0000143482" description="Maturase K">
    <location>
        <begin position="1"/>
        <end position="520"/>
    </location>
</feature>
<sequence length="520" mass="61889">MQKEKYKKYFEIDGSFKKSFLYPLIFREYIYIVTYARGLNEYGSIFSENLGYDNKLSLLIIKRLITRMNQPDHFKILSTDSEQPTLFRYNNILYFQMISVGLATIIEIPFSLKSLCSFERLHIVKSQNLRSIHSIFPFLEDKLAHLNYVSTGLIPYPIHLEKLVQAVRFWIKDSACLHLLRLFFHEYSNWNSQFISNKLISFIFFCKKEFKTFMVLYNIYIYENESILFFLRNQVFYLRSTFSSFLLERNFFYEKMEQFTEVFDNCFGIVLWLFKDTFMHYARYQGKFFLASKGTPLRIKKWKYYLVNLWQCRFFVWSQPENIYLNSLSKHSVHFLGYLSSLGLNPSVFRSQMVENSFLIDNRKCKLDTKIPIFSLISALEKAKFCNAVGHPISKPTWAHSPDSDIIDRFVCICKNLSHYYSGSSTKSLYRIKYILRLSCVKTLARKHKSTVRIFLKRLGSGLLEEFFTEEKRILSLIPRTSSISQRLYKGRVWYLDIVCINELAHHKNLFMKHGNRNSP</sequence>
<comment type="function">
    <text evidence="1">Usually encoded in the trnK tRNA gene intron. Probably assists in splicing its own and other chloroplast group II introns.</text>
</comment>
<comment type="subcellular location">
    <subcellularLocation>
        <location>Plastid</location>
        <location>Chloroplast</location>
    </subcellularLocation>
</comment>
<comment type="similarity">
    <text evidence="1">Belongs to the intron maturase 2 family. MatK subfamily.</text>
</comment>
<gene>
    <name evidence="1" type="primary">matK</name>
</gene>
<dbReference type="EMBL" id="AB038182">
    <property type="protein sequence ID" value="BAB83143.1"/>
    <property type="molecule type" value="Genomic_DNA"/>
</dbReference>
<dbReference type="GO" id="GO:0009507">
    <property type="term" value="C:chloroplast"/>
    <property type="evidence" value="ECO:0007669"/>
    <property type="project" value="UniProtKB-SubCell"/>
</dbReference>
<dbReference type="GO" id="GO:0003723">
    <property type="term" value="F:RNA binding"/>
    <property type="evidence" value="ECO:0007669"/>
    <property type="project" value="UniProtKB-KW"/>
</dbReference>
<dbReference type="GO" id="GO:0006397">
    <property type="term" value="P:mRNA processing"/>
    <property type="evidence" value="ECO:0007669"/>
    <property type="project" value="UniProtKB-KW"/>
</dbReference>
<dbReference type="GO" id="GO:0008380">
    <property type="term" value="P:RNA splicing"/>
    <property type="evidence" value="ECO:0007669"/>
    <property type="project" value="UniProtKB-UniRule"/>
</dbReference>
<dbReference type="GO" id="GO:0008033">
    <property type="term" value="P:tRNA processing"/>
    <property type="evidence" value="ECO:0007669"/>
    <property type="project" value="UniProtKB-KW"/>
</dbReference>
<dbReference type="HAMAP" id="MF_01390">
    <property type="entry name" value="MatK"/>
    <property type="match status" value="1"/>
</dbReference>
<dbReference type="InterPro" id="IPR024937">
    <property type="entry name" value="Domain_X"/>
</dbReference>
<dbReference type="InterPro" id="IPR002866">
    <property type="entry name" value="Maturase_MatK"/>
</dbReference>
<dbReference type="InterPro" id="IPR024942">
    <property type="entry name" value="Maturase_MatK_N"/>
</dbReference>
<dbReference type="PANTHER" id="PTHR34811">
    <property type="entry name" value="MATURASE K"/>
    <property type="match status" value="1"/>
</dbReference>
<dbReference type="PANTHER" id="PTHR34811:SF1">
    <property type="entry name" value="MATURASE K"/>
    <property type="match status" value="1"/>
</dbReference>
<dbReference type="Pfam" id="PF01348">
    <property type="entry name" value="Intron_maturas2"/>
    <property type="match status" value="1"/>
</dbReference>
<dbReference type="Pfam" id="PF01824">
    <property type="entry name" value="MatK_N"/>
    <property type="match status" value="1"/>
</dbReference>
<organism>
    <name type="scientific">Linum perenne</name>
    <name type="common">Perennial flax</name>
    <dbReference type="NCBI Taxonomy" id="35941"/>
    <lineage>
        <taxon>Eukaryota</taxon>
        <taxon>Viridiplantae</taxon>
        <taxon>Streptophyta</taxon>
        <taxon>Embryophyta</taxon>
        <taxon>Tracheophyta</taxon>
        <taxon>Spermatophyta</taxon>
        <taxon>Magnoliopsida</taxon>
        <taxon>eudicotyledons</taxon>
        <taxon>Gunneridae</taxon>
        <taxon>Pentapetalae</taxon>
        <taxon>rosids</taxon>
        <taxon>fabids</taxon>
        <taxon>Malpighiales</taxon>
        <taxon>Linaceae</taxon>
        <taxon>Linum</taxon>
    </lineage>
</organism>